<evidence type="ECO:0000250" key="1"/>
<evidence type="ECO:0000305" key="2"/>
<name>MSRA_PSEAE</name>
<keyword id="KW-0560">Oxidoreductase</keyword>
<keyword id="KW-1185">Reference proteome</keyword>
<organism>
    <name type="scientific">Pseudomonas aeruginosa (strain ATCC 15692 / DSM 22644 / CIP 104116 / JCM 14847 / LMG 12228 / 1C / PRS 101 / PAO1)</name>
    <dbReference type="NCBI Taxonomy" id="208964"/>
    <lineage>
        <taxon>Bacteria</taxon>
        <taxon>Pseudomonadati</taxon>
        <taxon>Pseudomonadota</taxon>
        <taxon>Gammaproteobacteria</taxon>
        <taxon>Pseudomonadales</taxon>
        <taxon>Pseudomonadaceae</taxon>
        <taxon>Pseudomonas</taxon>
    </lineage>
</organism>
<protein>
    <recommendedName>
        <fullName>Peptide methionine sulfoxide reductase MsrA</fullName>
        <shortName>Protein-methionine-S-oxide reductase</shortName>
        <ecNumber>1.8.4.11</ecNumber>
    </recommendedName>
    <alternativeName>
        <fullName>Peptide-methionine (S)-S-oxide reductase</fullName>
        <shortName>Peptide Met(O) reductase</shortName>
    </alternativeName>
</protein>
<comment type="function">
    <text evidence="1">Has an important function as a repair enzyme for proteins that have been inactivated by oxidation. Catalyzes the reversible oxidation-reduction of methionine sulfoxide in proteins to methionine (By similarity).</text>
</comment>
<comment type="catalytic activity">
    <reaction>
        <text>L-methionyl-[protein] + [thioredoxin]-disulfide + H2O = L-methionyl-(S)-S-oxide-[protein] + [thioredoxin]-dithiol</text>
        <dbReference type="Rhea" id="RHEA:14217"/>
        <dbReference type="Rhea" id="RHEA-COMP:10698"/>
        <dbReference type="Rhea" id="RHEA-COMP:10700"/>
        <dbReference type="Rhea" id="RHEA-COMP:12313"/>
        <dbReference type="Rhea" id="RHEA-COMP:12315"/>
        <dbReference type="ChEBI" id="CHEBI:15377"/>
        <dbReference type="ChEBI" id="CHEBI:16044"/>
        <dbReference type="ChEBI" id="CHEBI:29950"/>
        <dbReference type="ChEBI" id="CHEBI:44120"/>
        <dbReference type="ChEBI" id="CHEBI:50058"/>
        <dbReference type="EC" id="1.8.4.11"/>
    </reaction>
</comment>
<comment type="catalytic activity">
    <reaction>
        <text>[thioredoxin]-disulfide + L-methionine + H2O = L-methionine (S)-S-oxide + [thioredoxin]-dithiol</text>
        <dbReference type="Rhea" id="RHEA:19993"/>
        <dbReference type="Rhea" id="RHEA-COMP:10698"/>
        <dbReference type="Rhea" id="RHEA-COMP:10700"/>
        <dbReference type="ChEBI" id="CHEBI:15377"/>
        <dbReference type="ChEBI" id="CHEBI:29950"/>
        <dbReference type="ChEBI" id="CHEBI:50058"/>
        <dbReference type="ChEBI" id="CHEBI:57844"/>
        <dbReference type="ChEBI" id="CHEBI:58772"/>
        <dbReference type="EC" id="1.8.4.11"/>
    </reaction>
</comment>
<comment type="similarity">
    <text evidence="2">Belongs to the MsrA Met sulfoxide reductase family.</text>
</comment>
<feature type="chain" id="PRO_0000138566" description="Peptide methionine sulfoxide reductase MsrA">
    <location>
        <begin position="1"/>
        <end position="215"/>
    </location>
</feature>
<feature type="active site" evidence="1">
    <location>
        <position position="58"/>
    </location>
</feature>
<sequence>MVLRSEILTKKSELPTPDQALPGRESAMPVPEAHFVNGRPLTAPFPAGLQQVLFGMGCFWGAERRLWQQPGVWVTAVGYAGGYTPNPTYDEVCSGLTGHSEVVLVVYNPQETSFEQLLKVFWEAHDPTQGMRQGGDIGTQYRSVIYTFDAAQKAAAMASRESFQAELAKAGYDRITTEIADVPPFYYAEAYHQQYLAKNPNGYCGLGGTGVCLPA</sequence>
<gene>
    <name type="primary">msrA</name>
    <name type="ordered locus">PA5018</name>
</gene>
<dbReference type="EC" id="1.8.4.11"/>
<dbReference type="EMBL" id="AE004091">
    <property type="protein sequence ID" value="AAG08403.1"/>
    <property type="molecule type" value="Genomic_DNA"/>
</dbReference>
<dbReference type="PIR" id="B83019">
    <property type="entry name" value="B83019"/>
</dbReference>
<dbReference type="RefSeq" id="NP_253705.1">
    <property type="nucleotide sequence ID" value="NC_002516.2"/>
</dbReference>
<dbReference type="RefSeq" id="WP_003095789.1">
    <property type="nucleotide sequence ID" value="NZ_QZGE01000002.1"/>
</dbReference>
<dbReference type="SMR" id="Q9HUF1"/>
<dbReference type="FunCoup" id="Q9HUF1">
    <property type="interactions" value="669"/>
</dbReference>
<dbReference type="STRING" id="208964.PA5018"/>
<dbReference type="PaxDb" id="208964-PA5018"/>
<dbReference type="DNASU" id="881240"/>
<dbReference type="GeneID" id="881240"/>
<dbReference type="KEGG" id="pae:PA5018"/>
<dbReference type="PATRIC" id="fig|208964.12.peg.5260"/>
<dbReference type="PseudoCAP" id="PA5018"/>
<dbReference type="HOGENOM" id="CLU_031040_10_3_6"/>
<dbReference type="InParanoid" id="Q9HUF1"/>
<dbReference type="OrthoDB" id="4174719at2"/>
<dbReference type="PhylomeDB" id="Q9HUF1"/>
<dbReference type="BioCyc" id="PAER208964:G1FZ6-5134-MONOMER"/>
<dbReference type="Proteomes" id="UP000002438">
    <property type="component" value="Chromosome"/>
</dbReference>
<dbReference type="GO" id="GO:0005737">
    <property type="term" value="C:cytoplasm"/>
    <property type="evidence" value="ECO:0000318"/>
    <property type="project" value="GO_Central"/>
</dbReference>
<dbReference type="GO" id="GO:0036456">
    <property type="term" value="F:L-methionine-(S)-S-oxide reductase activity"/>
    <property type="evidence" value="ECO:0000318"/>
    <property type="project" value="GO_Central"/>
</dbReference>
<dbReference type="GO" id="GO:0008113">
    <property type="term" value="F:peptide-methionine (S)-S-oxide reductase activity"/>
    <property type="evidence" value="ECO:0000318"/>
    <property type="project" value="GO_Central"/>
</dbReference>
<dbReference type="GO" id="GO:0034599">
    <property type="term" value="P:cellular response to oxidative stress"/>
    <property type="evidence" value="ECO:0000315"/>
    <property type="project" value="PseudoCAP"/>
</dbReference>
<dbReference type="GO" id="GO:0036211">
    <property type="term" value="P:protein modification process"/>
    <property type="evidence" value="ECO:0007669"/>
    <property type="project" value="UniProtKB-UniRule"/>
</dbReference>
<dbReference type="GO" id="GO:1901530">
    <property type="term" value="P:response to hypochlorite"/>
    <property type="evidence" value="ECO:0000315"/>
    <property type="project" value="PseudoCAP"/>
</dbReference>
<dbReference type="FunFam" id="3.30.1060.10:FF:000001">
    <property type="entry name" value="Peptide methionine sulfoxide reductase MsrA"/>
    <property type="match status" value="1"/>
</dbReference>
<dbReference type="Gene3D" id="3.30.1060.10">
    <property type="entry name" value="Peptide methionine sulphoxide reductase MsrA"/>
    <property type="match status" value="1"/>
</dbReference>
<dbReference type="HAMAP" id="MF_01401">
    <property type="entry name" value="MsrA"/>
    <property type="match status" value="1"/>
</dbReference>
<dbReference type="InterPro" id="IPR002569">
    <property type="entry name" value="Met_Sox_Rdtase_MsrA_dom"/>
</dbReference>
<dbReference type="InterPro" id="IPR036509">
    <property type="entry name" value="Met_Sox_Rdtase_MsrA_sf"/>
</dbReference>
<dbReference type="InterPro" id="IPR050162">
    <property type="entry name" value="MsrA_MetSO_reductase"/>
</dbReference>
<dbReference type="NCBIfam" id="TIGR00401">
    <property type="entry name" value="msrA"/>
    <property type="match status" value="1"/>
</dbReference>
<dbReference type="PANTHER" id="PTHR42799">
    <property type="entry name" value="MITOCHONDRIAL PEPTIDE METHIONINE SULFOXIDE REDUCTASE"/>
    <property type="match status" value="1"/>
</dbReference>
<dbReference type="PANTHER" id="PTHR42799:SF2">
    <property type="entry name" value="MITOCHONDRIAL PEPTIDE METHIONINE SULFOXIDE REDUCTASE"/>
    <property type="match status" value="1"/>
</dbReference>
<dbReference type="Pfam" id="PF01625">
    <property type="entry name" value="PMSR"/>
    <property type="match status" value="1"/>
</dbReference>
<dbReference type="SUPFAM" id="SSF55068">
    <property type="entry name" value="Peptide methionine sulfoxide reductase"/>
    <property type="match status" value="1"/>
</dbReference>
<accession>Q9HUF1</accession>
<proteinExistence type="inferred from homology"/>
<reference key="1">
    <citation type="journal article" date="2000" name="Nature">
        <title>Complete genome sequence of Pseudomonas aeruginosa PAO1, an opportunistic pathogen.</title>
        <authorList>
            <person name="Stover C.K."/>
            <person name="Pham X.-Q.T."/>
            <person name="Erwin A.L."/>
            <person name="Mizoguchi S.D."/>
            <person name="Warrener P."/>
            <person name="Hickey M.J."/>
            <person name="Brinkman F.S.L."/>
            <person name="Hufnagle W.O."/>
            <person name="Kowalik D.J."/>
            <person name="Lagrou M."/>
            <person name="Garber R.L."/>
            <person name="Goltry L."/>
            <person name="Tolentino E."/>
            <person name="Westbrock-Wadman S."/>
            <person name="Yuan Y."/>
            <person name="Brody L.L."/>
            <person name="Coulter S.N."/>
            <person name="Folger K.R."/>
            <person name="Kas A."/>
            <person name="Larbig K."/>
            <person name="Lim R.M."/>
            <person name="Smith K.A."/>
            <person name="Spencer D.H."/>
            <person name="Wong G.K.-S."/>
            <person name="Wu Z."/>
            <person name="Paulsen I.T."/>
            <person name="Reizer J."/>
            <person name="Saier M.H. Jr."/>
            <person name="Hancock R.E.W."/>
            <person name="Lory S."/>
            <person name="Olson M.V."/>
        </authorList>
    </citation>
    <scope>NUCLEOTIDE SEQUENCE [LARGE SCALE GENOMIC DNA]</scope>
    <source>
        <strain>ATCC 15692 / DSM 22644 / CIP 104116 / JCM 14847 / LMG 12228 / 1C / PRS 101 / PAO1</strain>
    </source>
</reference>